<gene>
    <name evidence="1" type="primary">secD</name>
    <name type="ordered locus">Pmob_1116</name>
</gene>
<proteinExistence type="inferred from homology"/>
<organism>
    <name type="scientific">Petrotoga mobilis (strain DSM 10674 / SJ95)</name>
    <dbReference type="NCBI Taxonomy" id="403833"/>
    <lineage>
        <taxon>Bacteria</taxon>
        <taxon>Thermotogati</taxon>
        <taxon>Thermotogota</taxon>
        <taxon>Thermotogae</taxon>
        <taxon>Petrotogales</taxon>
        <taxon>Petrotogaceae</taxon>
        <taxon>Petrotoga</taxon>
    </lineage>
</organism>
<keyword id="KW-0997">Cell inner membrane</keyword>
<keyword id="KW-1003">Cell membrane</keyword>
<keyword id="KW-0472">Membrane</keyword>
<keyword id="KW-0653">Protein transport</keyword>
<keyword id="KW-0811">Translocation</keyword>
<keyword id="KW-0812">Transmembrane</keyword>
<keyword id="KW-1133">Transmembrane helix</keyword>
<keyword id="KW-0813">Transport</keyword>
<comment type="function">
    <text evidence="1">Part of the Sec protein translocase complex. Interacts with the SecYEG preprotein conducting channel. SecDF uses the proton motive force (PMF) to complete protein translocation after the ATP-dependent function of SecA.</text>
</comment>
<comment type="subunit">
    <text evidence="1">Forms a complex with SecF. Part of the essential Sec protein translocation apparatus which comprises SecA, SecYEG and auxiliary proteins SecDF. Other proteins may also be involved.</text>
</comment>
<comment type="subcellular location">
    <subcellularLocation>
        <location evidence="1">Cell inner membrane</location>
        <topology evidence="1">Multi-pass membrane protein</topology>
    </subcellularLocation>
</comment>
<comment type="similarity">
    <text evidence="1">Belongs to the SecD/SecF family. SecD subfamily.</text>
</comment>
<feature type="chain" id="PRO_5000286884" description="Protein translocase subunit SecD">
    <location>
        <begin position="1"/>
        <end position="472"/>
    </location>
</feature>
<feature type="transmembrane region" description="Helical" evidence="1">
    <location>
        <begin position="8"/>
        <end position="28"/>
    </location>
</feature>
<feature type="transmembrane region" description="Helical" evidence="1">
    <location>
        <begin position="300"/>
        <end position="320"/>
    </location>
</feature>
<feature type="transmembrane region" description="Helical" evidence="1">
    <location>
        <begin position="325"/>
        <end position="347"/>
    </location>
</feature>
<feature type="transmembrane region" description="Helical" evidence="1">
    <location>
        <begin position="353"/>
        <end position="375"/>
    </location>
</feature>
<feature type="transmembrane region" description="Helical" evidence="1">
    <location>
        <begin position="396"/>
        <end position="416"/>
    </location>
</feature>
<feature type="transmembrane region" description="Helical" evidence="1">
    <location>
        <begin position="424"/>
        <end position="444"/>
    </location>
</feature>
<dbReference type="EMBL" id="CP000879">
    <property type="protein sequence ID" value="ABX31835.1"/>
    <property type="molecule type" value="Genomic_DNA"/>
</dbReference>
<dbReference type="RefSeq" id="WP_012208936.1">
    <property type="nucleotide sequence ID" value="NC_010003.1"/>
</dbReference>
<dbReference type="SMR" id="A9BG79"/>
<dbReference type="STRING" id="403833.Pmob_1116"/>
<dbReference type="KEGG" id="pmo:Pmob_1116"/>
<dbReference type="eggNOG" id="COG0342">
    <property type="taxonomic scope" value="Bacteria"/>
</dbReference>
<dbReference type="HOGENOM" id="CLU_007894_4_2_0"/>
<dbReference type="OrthoDB" id="9805019at2"/>
<dbReference type="Proteomes" id="UP000000789">
    <property type="component" value="Chromosome"/>
</dbReference>
<dbReference type="GO" id="GO:0005886">
    <property type="term" value="C:plasma membrane"/>
    <property type="evidence" value="ECO:0007669"/>
    <property type="project" value="UniProtKB-SubCell"/>
</dbReference>
<dbReference type="GO" id="GO:0015450">
    <property type="term" value="F:protein-transporting ATPase activity"/>
    <property type="evidence" value="ECO:0007669"/>
    <property type="project" value="InterPro"/>
</dbReference>
<dbReference type="GO" id="GO:0065002">
    <property type="term" value="P:intracellular protein transmembrane transport"/>
    <property type="evidence" value="ECO:0007669"/>
    <property type="project" value="UniProtKB-UniRule"/>
</dbReference>
<dbReference type="GO" id="GO:0006605">
    <property type="term" value="P:protein targeting"/>
    <property type="evidence" value="ECO:0007669"/>
    <property type="project" value="UniProtKB-UniRule"/>
</dbReference>
<dbReference type="GO" id="GO:0043952">
    <property type="term" value="P:protein transport by the Sec complex"/>
    <property type="evidence" value="ECO:0007669"/>
    <property type="project" value="UniProtKB-UniRule"/>
</dbReference>
<dbReference type="FunFam" id="1.20.1640.10:FF:000004">
    <property type="entry name" value="Protein translocase subunit SecD"/>
    <property type="match status" value="1"/>
</dbReference>
<dbReference type="Gene3D" id="3.30.1360.200">
    <property type="match status" value="1"/>
</dbReference>
<dbReference type="Gene3D" id="3.30.70.3400">
    <property type="match status" value="1"/>
</dbReference>
<dbReference type="Gene3D" id="1.20.1640.10">
    <property type="entry name" value="Multidrug efflux transporter AcrB transmembrane domain"/>
    <property type="match status" value="1"/>
</dbReference>
<dbReference type="HAMAP" id="MF_01463_B">
    <property type="entry name" value="SecD_B"/>
    <property type="match status" value="1"/>
</dbReference>
<dbReference type="InterPro" id="IPR005791">
    <property type="entry name" value="SecD"/>
</dbReference>
<dbReference type="InterPro" id="IPR022813">
    <property type="entry name" value="SecD/SecF_arch_bac"/>
</dbReference>
<dbReference type="InterPro" id="IPR022645">
    <property type="entry name" value="SecD/SecF_bac"/>
</dbReference>
<dbReference type="InterPro" id="IPR048631">
    <property type="entry name" value="SecD_1st"/>
</dbReference>
<dbReference type="InterPro" id="IPR048634">
    <property type="entry name" value="SecD_SecF_C"/>
</dbReference>
<dbReference type="InterPro" id="IPR055344">
    <property type="entry name" value="SecD_SecF_C_bact"/>
</dbReference>
<dbReference type="InterPro" id="IPR054384">
    <property type="entry name" value="SecDF_P1_head"/>
</dbReference>
<dbReference type="NCBIfam" id="TIGR00916">
    <property type="entry name" value="2A0604s01"/>
    <property type="match status" value="1"/>
</dbReference>
<dbReference type="NCBIfam" id="TIGR01129">
    <property type="entry name" value="secD"/>
    <property type="match status" value="1"/>
</dbReference>
<dbReference type="PANTHER" id="PTHR30081:SF1">
    <property type="entry name" value="PROTEIN TRANSLOCASE SUBUNIT SECD"/>
    <property type="match status" value="1"/>
</dbReference>
<dbReference type="PANTHER" id="PTHR30081">
    <property type="entry name" value="PROTEIN-EXPORT MEMBRANE PROTEIN SEC"/>
    <property type="match status" value="1"/>
</dbReference>
<dbReference type="Pfam" id="PF21760">
    <property type="entry name" value="SecD_1st"/>
    <property type="match status" value="1"/>
</dbReference>
<dbReference type="Pfam" id="PF02355">
    <property type="entry name" value="SecD_SecF_C"/>
    <property type="match status" value="1"/>
</dbReference>
<dbReference type="Pfam" id="PF22599">
    <property type="entry name" value="SecDF_P1_head"/>
    <property type="match status" value="1"/>
</dbReference>
<dbReference type="PRINTS" id="PR01755">
    <property type="entry name" value="SECFTRNLCASE"/>
</dbReference>
<dbReference type="SUPFAM" id="SSF82866">
    <property type="entry name" value="Multidrug efflux transporter AcrB transmembrane domain"/>
    <property type="match status" value="1"/>
</dbReference>
<name>SECD_PETMO</name>
<accession>A9BG79</accession>
<reference key="1">
    <citation type="submission" date="2007-11" db="EMBL/GenBank/DDBJ databases">
        <title>Complete sequence of Petroga mobilis SJ95.</title>
        <authorList>
            <consortium name="US DOE Joint Genome Institute"/>
            <person name="Copeland A."/>
            <person name="Lucas S."/>
            <person name="Lapidus A."/>
            <person name="Barry K."/>
            <person name="Glavina del Rio T."/>
            <person name="Dalin E."/>
            <person name="Tice H."/>
            <person name="Pitluck S."/>
            <person name="Meincke L."/>
            <person name="Brettin T."/>
            <person name="Bruce D."/>
            <person name="Detter J.C."/>
            <person name="Han C."/>
            <person name="Kuske C.R."/>
            <person name="Schmutz J."/>
            <person name="Larimer F."/>
            <person name="Land M."/>
            <person name="Hauser L."/>
            <person name="Kyrpides N."/>
            <person name="Mikhailova N."/>
            <person name="Noll K."/>
            <person name="Richardson P."/>
        </authorList>
    </citation>
    <scope>NUCLEOTIDE SEQUENCE [LARGE SCALE GENOMIC DNA]</scope>
    <source>
        <strain>DSM 10674 / SJ95</strain>
    </source>
</reference>
<sequence length="472" mass="51980">MRNRRIRILFTVIVFVFALLGLILPLSGNVNDISILRFFPNINLGLDIQGGVLLEYSFDVPEGVNTSEVVDNVITVLRRRMDNAGYTEAIVSEVVSGGESRVRVEIPGISDTQRAEELIGSKGKLYFAEVLEVVESTTTPEITRNRTIQINGEEIEMYSYVKDSNNPNLWYRVKNVFEFGDAPFQITGLDVTDAVASLNSQGAGFVVNLNFSNEGRQKFELATANLVNERIAIILDDEVIIAPVVRERISQGRAEISGIESMEEAQNIAVLIKSGNLPVDLVKYQERTLGPTLGRDIVTTIINAGIIGLIIVMIYMIIFYRWMGVIADIALIYNTFLLMGILSWTGAILTLPGIAGIILTFGTTVDGNIIIYERIKEELRIGRPPLTAVKFGFNKVFSTIFDANITTILAGLVLFFVTSGSIRGFAVTLIIGVLGAMFTNLVVSRLLLESTSHFLKPEKYVKGIVVEKGGTK</sequence>
<protein>
    <recommendedName>
        <fullName evidence="1">Protein translocase subunit SecD</fullName>
    </recommendedName>
</protein>
<evidence type="ECO:0000255" key="1">
    <source>
        <dbReference type="HAMAP-Rule" id="MF_01463"/>
    </source>
</evidence>